<protein>
    <recommendedName>
        <fullName evidence="1">Probable cytosol aminopeptidase</fullName>
        <ecNumber evidence="1">3.4.11.1</ecNumber>
    </recommendedName>
    <alternativeName>
        <fullName evidence="1">Leucine aminopeptidase</fullName>
        <shortName evidence="1">LAP</shortName>
        <ecNumber evidence="1">3.4.11.10</ecNumber>
    </alternativeName>
    <alternativeName>
        <fullName evidence="1">Leucyl aminopeptidase</fullName>
    </alternativeName>
</protein>
<organism>
    <name type="scientific">Xanthomonas campestris pv. campestris (strain B100)</name>
    <dbReference type="NCBI Taxonomy" id="509169"/>
    <lineage>
        <taxon>Bacteria</taxon>
        <taxon>Pseudomonadati</taxon>
        <taxon>Pseudomonadota</taxon>
        <taxon>Gammaproteobacteria</taxon>
        <taxon>Lysobacterales</taxon>
        <taxon>Lysobacteraceae</taxon>
        <taxon>Xanthomonas</taxon>
    </lineage>
</organism>
<evidence type="ECO:0000255" key="1">
    <source>
        <dbReference type="HAMAP-Rule" id="MF_00181"/>
    </source>
</evidence>
<proteinExistence type="inferred from homology"/>
<comment type="function">
    <text evidence="1">Presumably involved in the processing and regular turnover of intracellular proteins. Catalyzes the removal of unsubstituted N-terminal amino acids from various peptides.</text>
</comment>
<comment type="catalytic activity">
    <reaction evidence="1">
        <text>Release of an N-terminal amino acid, Xaa-|-Yaa-, in which Xaa is preferably Leu, but may be other amino acids including Pro although not Arg or Lys, and Yaa may be Pro. Amino acid amides and methyl esters are also readily hydrolyzed, but rates on arylamides are exceedingly low.</text>
        <dbReference type="EC" id="3.4.11.1"/>
    </reaction>
</comment>
<comment type="catalytic activity">
    <reaction evidence="1">
        <text>Release of an N-terminal amino acid, preferentially leucine, but not glutamic or aspartic acids.</text>
        <dbReference type="EC" id="3.4.11.10"/>
    </reaction>
</comment>
<comment type="cofactor">
    <cofactor evidence="1">
        <name>Mn(2+)</name>
        <dbReference type="ChEBI" id="CHEBI:29035"/>
    </cofactor>
    <text evidence="1">Binds 2 manganese ions per subunit.</text>
</comment>
<comment type="subcellular location">
    <subcellularLocation>
        <location evidence="1">Cytoplasm</location>
    </subcellularLocation>
</comment>
<comment type="similarity">
    <text evidence="1">Belongs to the peptidase M17 family.</text>
</comment>
<gene>
    <name evidence="1" type="primary">pepA</name>
    <name type="ordered locus">xcc-b100_3705</name>
</gene>
<name>AMPA_XANCB</name>
<keyword id="KW-0031">Aminopeptidase</keyword>
<keyword id="KW-0963">Cytoplasm</keyword>
<keyword id="KW-0378">Hydrolase</keyword>
<keyword id="KW-0464">Manganese</keyword>
<keyword id="KW-0479">Metal-binding</keyword>
<keyword id="KW-0645">Protease</keyword>
<feature type="chain" id="PRO_1000098359" description="Probable cytosol aminopeptidase">
    <location>
        <begin position="1"/>
        <end position="493"/>
    </location>
</feature>
<feature type="active site" evidence="1">
    <location>
        <position position="274"/>
    </location>
</feature>
<feature type="active site" evidence="1">
    <location>
        <position position="348"/>
    </location>
</feature>
<feature type="binding site" evidence="1">
    <location>
        <position position="262"/>
    </location>
    <ligand>
        <name>Mn(2+)</name>
        <dbReference type="ChEBI" id="CHEBI:29035"/>
        <label>2</label>
    </ligand>
</feature>
<feature type="binding site" evidence="1">
    <location>
        <position position="267"/>
    </location>
    <ligand>
        <name>Mn(2+)</name>
        <dbReference type="ChEBI" id="CHEBI:29035"/>
        <label>1</label>
    </ligand>
</feature>
<feature type="binding site" evidence="1">
    <location>
        <position position="267"/>
    </location>
    <ligand>
        <name>Mn(2+)</name>
        <dbReference type="ChEBI" id="CHEBI:29035"/>
        <label>2</label>
    </ligand>
</feature>
<feature type="binding site" evidence="1">
    <location>
        <position position="285"/>
    </location>
    <ligand>
        <name>Mn(2+)</name>
        <dbReference type="ChEBI" id="CHEBI:29035"/>
        <label>2</label>
    </ligand>
</feature>
<feature type="binding site" evidence="1">
    <location>
        <position position="344"/>
    </location>
    <ligand>
        <name>Mn(2+)</name>
        <dbReference type="ChEBI" id="CHEBI:29035"/>
        <label>1</label>
    </ligand>
</feature>
<feature type="binding site" evidence="1">
    <location>
        <position position="346"/>
    </location>
    <ligand>
        <name>Mn(2+)</name>
        <dbReference type="ChEBI" id="CHEBI:29035"/>
        <label>1</label>
    </ligand>
</feature>
<feature type="binding site" evidence="1">
    <location>
        <position position="346"/>
    </location>
    <ligand>
        <name>Mn(2+)</name>
        <dbReference type="ChEBI" id="CHEBI:29035"/>
        <label>2</label>
    </ligand>
</feature>
<accession>B0RVI0</accession>
<reference key="1">
    <citation type="journal article" date="2008" name="J. Biotechnol.">
        <title>The genome of Xanthomonas campestris pv. campestris B100 and its use for the reconstruction of metabolic pathways involved in xanthan biosynthesis.</title>
        <authorList>
            <person name="Vorhoelter F.-J."/>
            <person name="Schneiker S."/>
            <person name="Goesmann A."/>
            <person name="Krause L."/>
            <person name="Bekel T."/>
            <person name="Kaiser O."/>
            <person name="Linke B."/>
            <person name="Patschkowski T."/>
            <person name="Rueckert C."/>
            <person name="Schmid J."/>
            <person name="Sidhu V.K."/>
            <person name="Sieber V."/>
            <person name="Tauch A."/>
            <person name="Watt S.A."/>
            <person name="Weisshaar B."/>
            <person name="Becker A."/>
            <person name="Niehaus K."/>
            <person name="Puehler A."/>
        </authorList>
    </citation>
    <scope>NUCLEOTIDE SEQUENCE [LARGE SCALE GENOMIC DNA]</scope>
    <source>
        <strain>B100</strain>
    </source>
</reference>
<dbReference type="EC" id="3.4.11.1" evidence="1"/>
<dbReference type="EC" id="3.4.11.10" evidence="1"/>
<dbReference type="EMBL" id="AM920689">
    <property type="protein sequence ID" value="CAP53071.1"/>
    <property type="molecule type" value="Genomic_DNA"/>
</dbReference>
<dbReference type="SMR" id="B0RVI0"/>
<dbReference type="KEGG" id="xca:xcc-b100_3705"/>
<dbReference type="HOGENOM" id="CLU_013734_2_2_6"/>
<dbReference type="Proteomes" id="UP000001188">
    <property type="component" value="Chromosome"/>
</dbReference>
<dbReference type="GO" id="GO:0005737">
    <property type="term" value="C:cytoplasm"/>
    <property type="evidence" value="ECO:0007669"/>
    <property type="project" value="UniProtKB-SubCell"/>
</dbReference>
<dbReference type="GO" id="GO:0030145">
    <property type="term" value="F:manganese ion binding"/>
    <property type="evidence" value="ECO:0007669"/>
    <property type="project" value="UniProtKB-UniRule"/>
</dbReference>
<dbReference type="GO" id="GO:0070006">
    <property type="term" value="F:metalloaminopeptidase activity"/>
    <property type="evidence" value="ECO:0007669"/>
    <property type="project" value="InterPro"/>
</dbReference>
<dbReference type="GO" id="GO:0006508">
    <property type="term" value="P:proteolysis"/>
    <property type="evidence" value="ECO:0007669"/>
    <property type="project" value="UniProtKB-KW"/>
</dbReference>
<dbReference type="CDD" id="cd00433">
    <property type="entry name" value="Peptidase_M17"/>
    <property type="match status" value="1"/>
</dbReference>
<dbReference type="Gene3D" id="3.40.220.10">
    <property type="entry name" value="Leucine Aminopeptidase, subunit E, domain 1"/>
    <property type="match status" value="1"/>
</dbReference>
<dbReference type="Gene3D" id="3.40.630.10">
    <property type="entry name" value="Zn peptidases"/>
    <property type="match status" value="1"/>
</dbReference>
<dbReference type="HAMAP" id="MF_00181">
    <property type="entry name" value="Cytosol_peptidase_M17"/>
    <property type="match status" value="1"/>
</dbReference>
<dbReference type="InterPro" id="IPR011356">
    <property type="entry name" value="Leucine_aapep/pepB"/>
</dbReference>
<dbReference type="InterPro" id="IPR043472">
    <property type="entry name" value="Macro_dom-like"/>
</dbReference>
<dbReference type="InterPro" id="IPR000819">
    <property type="entry name" value="Peptidase_M17_C"/>
</dbReference>
<dbReference type="InterPro" id="IPR023042">
    <property type="entry name" value="Peptidase_M17_leu_NH2_pept"/>
</dbReference>
<dbReference type="InterPro" id="IPR008283">
    <property type="entry name" value="Peptidase_M17_N"/>
</dbReference>
<dbReference type="NCBIfam" id="NF002074">
    <property type="entry name" value="PRK00913.1-4"/>
    <property type="match status" value="1"/>
</dbReference>
<dbReference type="PANTHER" id="PTHR11963:SF23">
    <property type="entry name" value="CYTOSOL AMINOPEPTIDASE"/>
    <property type="match status" value="1"/>
</dbReference>
<dbReference type="PANTHER" id="PTHR11963">
    <property type="entry name" value="LEUCINE AMINOPEPTIDASE-RELATED"/>
    <property type="match status" value="1"/>
</dbReference>
<dbReference type="Pfam" id="PF00883">
    <property type="entry name" value="Peptidase_M17"/>
    <property type="match status" value="1"/>
</dbReference>
<dbReference type="Pfam" id="PF02789">
    <property type="entry name" value="Peptidase_M17_N"/>
    <property type="match status" value="1"/>
</dbReference>
<dbReference type="PRINTS" id="PR00481">
    <property type="entry name" value="LAMNOPPTDASE"/>
</dbReference>
<dbReference type="SUPFAM" id="SSF52949">
    <property type="entry name" value="Macro domain-like"/>
    <property type="match status" value="1"/>
</dbReference>
<dbReference type="SUPFAM" id="SSF53187">
    <property type="entry name" value="Zn-dependent exopeptidases"/>
    <property type="match status" value="1"/>
</dbReference>
<dbReference type="PROSITE" id="PS00631">
    <property type="entry name" value="CYTOSOL_AP"/>
    <property type="match status" value="1"/>
</dbReference>
<sequence>MALQFTLNQDAPASAHVDCIVVGAFADKTLSPAAQALDSASQGRLTALVARGDVATKTGTTSLVHDLPGVQAPRVLVVGLGDAAKFGVAPYLKAIGDAARALKTGPIGTALLTLTELPVKARDAAWNIRQAVIVSDHAAYRYTATLGKKKVDDTGLTTLAIAGDDARALAVGIATAEGVEFARELGNLPPNYCTPAYLAETAAAFAGKFPGAEAEILDEQQMEALGMGSLLSVARGSANRPRLIVLKWNGGGEARPYVLVGKGITFDTGGVNLKTQGGIEEMKYDMCGGANVIGTFVATVKAELPINLVVVVPAVENAIDGNAYRPSDVITSMSGKTIEVGNTDAEGRLILCDALTYAERFNPEALVDVATLTGACMVALGHQTAGLMSKHDDLANELLAAGEHVFDRAWRLPLWDEYQGLLDSTFADVYNIGGRWGGAITAGCFLSRFTENQRWAHLDIAGVASDEGKRGMATGRPVGLLTQWLLDRAEGGN</sequence>